<name>Y1071_ARCFU</name>
<reference key="1">
    <citation type="journal article" date="1997" name="Nature">
        <title>The complete genome sequence of the hyperthermophilic, sulphate-reducing archaeon Archaeoglobus fulgidus.</title>
        <authorList>
            <person name="Klenk H.-P."/>
            <person name="Clayton R.A."/>
            <person name="Tomb J.-F."/>
            <person name="White O."/>
            <person name="Nelson K.E."/>
            <person name="Ketchum K.A."/>
            <person name="Dodson R.J."/>
            <person name="Gwinn M.L."/>
            <person name="Hickey E.K."/>
            <person name="Peterson J.D."/>
            <person name="Richardson D.L."/>
            <person name="Kerlavage A.R."/>
            <person name="Graham D.E."/>
            <person name="Kyrpides N.C."/>
            <person name="Fleischmann R.D."/>
            <person name="Quackenbush J."/>
            <person name="Lee N.H."/>
            <person name="Sutton G.G."/>
            <person name="Gill S.R."/>
            <person name="Kirkness E.F."/>
            <person name="Dougherty B.A."/>
            <person name="McKenney K."/>
            <person name="Adams M.D."/>
            <person name="Loftus B.J."/>
            <person name="Peterson S.N."/>
            <person name="Reich C.I."/>
            <person name="McNeil L.K."/>
            <person name="Badger J.H."/>
            <person name="Glodek A."/>
            <person name="Zhou L."/>
            <person name="Overbeek R."/>
            <person name="Gocayne J.D."/>
            <person name="Weidman J.F."/>
            <person name="McDonald L.A."/>
            <person name="Utterback T.R."/>
            <person name="Cotton M.D."/>
            <person name="Spriggs T."/>
            <person name="Artiach P."/>
            <person name="Kaine B.P."/>
            <person name="Sykes S.M."/>
            <person name="Sadow P.W."/>
            <person name="D'Andrea K.P."/>
            <person name="Bowman C."/>
            <person name="Fujii C."/>
            <person name="Garland S.A."/>
            <person name="Mason T.M."/>
            <person name="Olsen G.J."/>
            <person name="Fraser C.M."/>
            <person name="Smith H.O."/>
            <person name="Woese C.R."/>
            <person name="Venter J.C."/>
        </authorList>
    </citation>
    <scope>NUCLEOTIDE SEQUENCE [LARGE SCALE GENOMIC DNA]</scope>
    <source>
        <strain>ATCC 49558 / DSM 4304 / JCM 9628 / NBRC 100126 / VC-16</strain>
    </source>
</reference>
<gene>
    <name type="ordered locus">AF_1071</name>
</gene>
<keyword id="KW-1185">Reference proteome</keyword>
<dbReference type="EMBL" id="AE000782">
    <property type="protein sequence ID" value="AAB90183.1"/>
    <property type="molecule type" value="Genomic_DNA"/>
</dbReference>
<dbReference type="PIR" id="G69383">
    <property type="entry name" value="G69383"/>
</dbReference>
<dbReference type="STRING" id="224325.AF_1071"/>
<dbReference type="PaxDb" id="224325-AF_1071"/>
<dbReference type="EnsemblBacteria" id="AAB90183">
    <property type="protein sequence ID" value="AAB90183"/>
    <property type="gene ID" value="AF_1071"/>
</dbReference>
<dbReference type="KEGG" id="afu:AF_1071"/>
<dbReference type="eggNOG" id="arCOG02125">
    <property type="taxonomic scope" value="Archaea"/>
</dbReference>
<dbReference type="HOGENOM" id="CLU_2406181_0_0_2"/>
<dbReference type="Proteomes" id="UP000002199">
    <property type="component" value="Chromosome"/>
</dbReference>
<dbReference type="GO" id="GO:0003676">
    <property type="term" value="F:nucleic acid binding"/>
    <property type="evidence" value="ECO:0007669"/>
    <property type="project" value="InterPro"/>
</dbReference>
<dbReference type="Gene3D" id="3.30.420.10">
    <property type="entry name" value="Ribonuclease H-like superfamily/Ribonuclease H"/>
    <property type="match status" value="1"/>
</dbReference>
<dbReference type="InterPro" id="IPR036397">
    <property type="entry name" value="RNaseH_sf"/>
</dbReference>
<organism>
    <name type="scientific">Archaeoglobus fulgidus (strain ATCC 49558 / DSM 4304 / JCM 9628 / NBRC 100126 / VC-16)</name>
    <dbReference type="NCBI Taxonomy" id="224325"/>
    <lineage>
        <taxon>Archaea</taxon>
        <taxon>Methanobacteriati</taxon>
        <taxon>Methanobacteriota</taxon>
        <taxon>Archaeoglobi</taxon>
        <taxon>Archaeoglobales</taxon>
        <taxon>Archaeoglobaceae</taxon>
        <taxon>Archaeoglobus</taxon>
    </lineage>
</organism>
<sequence length="92" mass="10807">MRKLRNKDILKVLREIAEYGIPEEILTDHGTQFVAAKSREKVKHILARVRLRESEKFGSVEAVVGWHNEIKPHRSLEWDELCNAFWCKLPPD</sequence>
<proteinExistence type="predicted"/>
<accession>O29191</accession>
<protein>
    <recommendedName>
        <fullName>Uncharacterized protein AF_1071</fullName>
    </recommendedName>
</protein>
<feature type="chain" id="PRO_0000127957" description="Uncharacterized protein AF_1071">
    <location>
        <begin position="1"/>
        <end position="92"/>
    </location>
</feature>